<protein>
    <recommendedName>
        <fullName evidence="4">Upstream-binding factor 1-like protein 1</fullName>
    </recommendedName>
</protein>
<proteinExistence type="evidence at protein level"/>
<keyword id="KW-0963">Cytoplasm</keyword>
<keyword id="KW-0217">Developmental protein</keyword>
<keyword id="KW-0238">DNA-binding</keyword>
<keyword id="KW-0539">Nucleus</keyword>
<keyword id="KW-1267">Proteomics identification</keyword>
<keyword id="KW-1185">Reference proteome</keyword>
<keyword id="KW-0677">Repeat</keyword>
<gene>
    <name evidence="5" type="primary">UBTFL1</name>
    <name type="synonym">C11orf27</name>
</gene>
<sequence length="393" mass="46134">MALPRSQGHWSNKDILRLLECMENNRPSDDNSTFSSTQSHMDWGKVAFKNFSGEMCRLKWLEISCNLRKFGTLKELVLEAKKCVKKMNKSQKYRNGPDFPKRPLTAYNRFFKESWPQYSQMYPGMRSQELTKILSKKYRELPEQMKQKYIQDFRKEKQEFEEKLARFREEHPDLVQKAKKSSVSKRTQNKVQKKFQKNIEEVRSLPKTDRFFKKVKFHGEPQKPPMNGYHKFHQDSWSSKEMQHLSVRERMVEIGRRWQRIPQSQKDHFKSQAEELQKQYKVKLDLWLKTLSPENYAAYKESTYAKGKNMAMTGGPDPRLKQADPQSSSAKGLQEGFGEGQGLQAAGTDSSQTIWVNCHVSMEPEENRKKDREKEESSNSSDCSSGEEIEVDV</sequence>
<organism>
    <name type="scientific">Homo sapiens</name>
    <name type="common">Human</name>
    <dbReference type="NCBI Taxonomy" id="9606"/>
    <lineage>
        <taxon>Eukaryota</taxon>
        <taxon>Metazoa</taxon>
        <taxon>Chordata</taxon>
        <taxon>Craniata</taxon>
        <taxon>Vertebrata</taxon>
        <taxon>Euteleostomi</taxon>
        <taxon>Mammalia</taxon>
        <taxon>Eutheria</taxon>
        <taxon>Euarchontoglires</taxon>
        <taxon>Primates</taxon>
        <taxon>Haplorrhini</taxon>
        <taxon>Catarrhini</taxon>
        <taxon>Hominidae</taxon>
        <taxon>Homo</taxon>
    </lineage>
</organism>
<evidence type="ECO:0000250" key="1">
    <source>
        <dbReference type="UniProtKB" id="Q3USZ2"/>
    </source>
</evidence>
<evidence type="ECO:0000255" key="2">
    <source>
        <dbReference type="PROSITE-ProRule" id="PRU00267"/>
    </source>
</evidence>
<evidence type="ECO:0000256" key="3">
    <source>
        <dbReference type="SAM" id="MobiDB-lite"/>
    </source>
</evidence>
<evidence type="ECO:0000305" key="4"/>
<evidence type="ECO:0000312" key="5">
    <source>
        <dbReference type="HGNC" id="HGNC:14533"/>
    </source>
</evidence>
<dbReference type="EMBL" id="AP000827">
    <property type="status" value="NOT_ANNOTATED_CDS"/>
    <property type="molecule type" value="Genomic_DNA"/>
</dbReference>
<dbReference type="CCDS" id="CCDS44704.1"/>
<dbReference type="RefSeq" id="NP_001137447.1">
    <property type="nucleotide sequence ID" value="NM_001143975.1"/>
</dbReference>
<dbReference type="SMR" id="P0CB47"/>
<dbReference type="BioGRID" id="568124">
    <property type="interactions" value="30"/>
</dbReference>
<dbReference type="FunCoup" id="P0CB47">
    <property type="interactions" value="155"/>
</dbReference>
<dbReference type="IntAct" id="P0CB47">
    <property type="interactions" value="26"/>
</dbReference>
<dbReference type="STRING" id="9606.ENSP00000485108"/>
<dbReference type="iPTMnet" id="P0CB47"/>
<dbReference type="PhosphoSitePlus" id="P0CB47"/>
<dbReference type="BioMuta" id="UBTFL1"/>
<dbReference type="DMDM" id="263545802"/>
<dbReference type="MassIVE" id="P0CB47"/>
<dbReference type="PaxDb" id="9606-ENSP00000485108"/>
<dbReference type="PeptideAtlas" id="P0CB47"/>
<dbReference type="ProteomicsDB" id="52437"/>
<dbReference type="Antibodypedia" id="74795">
    <property type="antibodies" value="22 antibodies from 11 providers"/>
</dbReference>
<dbReference type="DNASU" id="642623"/>
<dbReference type="Ensembl" id="ENST00000530464.2">
    <property type="protein sequence ID" value="ENSP00000485108.1"/>
    <property type="gene ID" value="ENSG00000255009.4"/>
</dbReference>
<dbReference type="GeneID" id="642623"/>
<dbReference type="KEGG" id="hsa:642623"/>
<dbReference type="MANE-Select" id="ENST00000530464.2">
    <property type="protein sequence ID" value="ENSP00000485108.1"/>
    <property type="RefSeq nucleotide sequence ID" value="NM_001143975.1"/>
    <property type="RefSeq protein sequence ID" value="NP_001137447.1"/>
</dbReference>
<dbReference type="UCSC" id="uc010rub.2">
    <property type="organism name" value="human"/>
</dbReference>
<dbReference type="AGR" id="HGNC:14533"/>
<dbReference type="CTD" id="642623"/>
<dbReference type="GeneCards" id="UBTFL1"/>
<dbReference type="HGNC" id="HGNC:14533">
    <property type="gene designation" value="UBTFL1"/>
</dbReference>
<dbReference type="HPA" id="ENSG00000255009">
    <property type="expression patterns" value="Not detected"/>
</dbReference>
<dbReference type="MIM" id="613696">
    <property type="type" value="gene"/>
</dbReference>
<dbReference type="neXtProt" id="NX_P0CB47"/>
<dbReference type="OpenTargets" id="ENSG00000255009"/>
<dbReference type="PharmGKB" id="PA164727456"/>
<dbReference type="VEuPathDB" id="HostDB:ENSG00000255009"/>
<dbReference type="eggNOG" id="KOG0381">
    <property type="taxonomic scope" value="Eukaryota"/>
</dbReference>
<dbReference type="GeneTree" id="ENSGT00940000163858"/>
<dbReference type="HOGENOM" id="CLU_021068_0_0_1"/>
<dbReference type="InParanoid" id="P0CB47"/>
<dbReference type="OMA" id="FHQDSWS"/>
<dbReference type="OrthoDB" id="1919336at2759"/>
<dbReference type="PAN-GO" id="P0CB47">
    <property type="GO annotations" value="5 GO annotations based on evolutionary models"/>
</dbReference>
<dbReference type="PhylomeDB" id="P0CB47"/>
<dbReference type="PathwayCommons" id="P0CB47"/>
<dbReference type="SignaLink" id="P0CB47"/>
<dbReference type="BioGRID-ORCS" id="642623">
    <property type="hits" value="5 hits in 184 CRISPR screens"/>
</dbReference>
<dbReference type="CD-CODE" id="91857CE7">
    <property type="entry name" value="Nucleolus"/>
</dbReference>
<dbReference type="GenomeRNAi" id="642623"/>
<dbReference type="Pharos" id="P0CB47">
    <property type="development level" value="Tdark"/>
</dbReference>
<dbReference type="PRO" id="PR:P0CB47"/>
<dbReference type="Proteomes" id="UP000005640">
    <property type="component" value="Chromosome 11"/>
</dbReference>
<dbReference type="RNAct" id="P0CB47">
    <property type="molecule type" value="protein"/>
</dbReference>
<dbReference type="Bgee" id="ENSG00000255009">
    <property type="expression patterns" value="Expressed in hindlimb stylopod muscle and 4 other cell types or tissues"/>
</dbReference>
<dbReference type="GO" id="GO:0005737">
    <property type="term" value="C:cytoplasm"/>
    <property type="evidence" value="ECO:0007669"/>
    <property type="project" value="UniProtKB-SubCell"/>
</dbReference>
<dbReference type="GO" id="GO:0005634">
    <property type="term" value="C:nucleus"/>
    <property type="evidence" value="ECO:0000318"/>
    <property type="project" value="GO_Central"/>
</dbReference>
<dbReference type="GO" id="GO:0001164">
    <property type="term" value="F:RNA polymerase I core promoter sequence-specific DNA binding"/>
    <property type="evidence" value="ECO:0000318"/>
    <property type="project" value="GO_Central"/>
</dbReference>
<dbReference type="GO" id="GO:0001181">
    <property type="term" value="F:RNA polymerase I general transcription initiation factor activity"/>
    <property type="evidence" value="ECO:0000318"/>
    <property type="project" value="GO_Central"/>
</dbReference>
<dbReference type="GO" id="GO:0001832">
    <property type="term" value="P:blastocyst growth"/>
    <property type="evidence" value="ECO:0007669"/>
    <property type="project" value="Ensembl"/>
</dbReference>
<dbReference type="GO" id="GO:0007566">
    <property type="term" value="P:embryo implantation"/>
    <property type="evidence" value="ECO:0007669"/>
    <property type="project" value="Ensembl"/>
</dbReference>
<dbReference type="GO" id="GO:0045943">
    <property type="term" value="P:positive regulation of transcription by RNA polymerase I"/>
    <property type="evidence" value="ECO:0000318"/>
    <property type="project" value="GO_Central"/>
</dbReference>
<dbReference type="GO" id="GO:0006360">
    <property type="term" value="P:transcription by RNA polymerase I"/>
    <property type="evidence" value="ECO:0000318"/>
    <property type="project" value="GO_Central"/>
</dbReference>
<dbReference type="CDD" id="cd21998">
    <property type="entry name" value="HMG-box_UBF1_rpt1-like"/>
    <property type="match status" value="1"/>
</dbReference>
<dbReference type="CDD" id="cd22003">
    <property type="entry name" value="HMG-box_UBF1_rpt6-like"/>
    <property type="match status" value="1"/>
</dbReference>
<dbReference type="Gene3D" id="1.10.30.10">
    <property type="entry name" value="High mobility group box domain"/>
    <property type="match status" value="2"/>
</dbReference>
<dbReference type="InterPro" id="IPR009071">
    <property type="entry name" value="HMG_box_dom"/>
</dbReference>
<dbReference type="InterPro" id="IPR036910">
    <property type="entry name" value="HMG_box_dom_sf"/>
</dbReference>
<dbReference type="InterPro" id="IPR051762">
    <property type="entry name" value="UBF1"/>
</dbReference>
<dbReference type="PANTHER" id="PTHR46318">
    <property type="entry name" value="UPSTREAM BINDING TRANSCRIPTION FACTOR"/>
    <property type="match status" value="1"/>
</dbReference>
<dbReference type="PANTHER" id="PTHR46318:SF1">
    <property type="entry name" value="UPSTREAM-BINDING FACTOR 1-LIKE PROTEIN 1-RELATED"/>
    <property type="match status" value="1"/>
</dbReference>
<dbReference type="Pfam" id="PF00505">
    <property type="entry name" value="HMG_box"/>
    <property type="match status" value="1"/>
</dbReference>
<dbReference type="SMART" id="SM00398">
    <property type="entry name" value="HMG"/>
    <property type="match status" value="2"/>
</dbReference>
<dbReference type="SUPFAM" id="SSF47095">
    <property type="entry name" value="HMG-box"/>
    <property type="match status" value="2"/>
</dbReference>
<dbReference type="PROSITE" id="PS50118">
    <property type="entry name" value="HMG_BOX_2"/>
    <property type="match status" value="2"/>
</dbReference>
<name>UBFL1_HUMAN</name>
<comment type="function">
    <text evidence="1">Essential for proliferation of the inner cell mass and trophectodermal cells in peri-implantation development.</text>
</comment>
<comment type="interaction">
    <interactant intactId="EBI-17208936">
        <id>P0CB47</id>
    </interactant>
    <interactant intactId="EBI-1211496">
        <id>Q5T5X7</id>
        <label>BEND3</label>
    </interactant>
    <organismsDiffer>false</organismsDiffer>
    <experiments>3</experiments>
</comment>
<comment type="interaction">
    <interactant intactId="EBI-17208936">
        <id>P0CB47</id>
    </interactant>
    <interactant intactId="EBI-18036948">
        <id>Q3SXR2</id>
        <label>C3orf36</label>
    </interactant>
    <organismsDiffer>false</organismsDiffer>
    <experiments>3</experiments>
</comment>
<comment type="interaction">
    <interactant intactId="EBI-17208936">
        <id>P0CB47</id>
    </interactant>
    <interactant intactId="EBI-1181367">
        <id>Q01850</id>
        <label>CDR2</label>
    </interactant>
    <organismsDiffer>false</organismsDiffer>
    <experiments>3</experiments>
</comment>
<comment type="interaction">
    <interactant intactId="EBI-17208936">
        <id>P0CB47</id>
    </interactant>
    <interactant intactId="EBI-742054">
        <id>Q96D03</id>
        <label>DDIT4L</label>
    </interactant>
    <organismsDiffer>false</organismsDiffer>
    <experiments>3</experiments>
</comment>
<comment type="interaction">
    <interactant intactId="EBI-17208936">
        <id>P0CB47</id>
    </interactant>
    <interactant intactId="EBI-5661036">
        <id>A1L4K1</id>
        <label>FSD2</label>
    </interactant>
    <organismsDiffer>false</organismsDiffer>
    <experiments>3</experiments>
</comment>
<comment type="interaction">
    <interactant intactId="EBI-17208936">
        <id>P0CB47</id>
    </interactant>
    <interactant intactId="EBI-618309">
        <id>Q08379</id>
        <label>GOLGA2</label>
    </interactant>
    <organismsDiffer>false</organismsDiffer>
    <experiments>3</experiments>
</comment>
<comment type="interaction">
    <interactant intactId="EBI-17208936">
        <id>P0CB47</id>
    </interactant>
    <interactant intactId="EBI-5916454">
        <id>A6NEM1</id>
        <label>GOLGA6L9</label>
    </interactant>
    <organismsDiffer>false</organismsDiffer>
    <experiments>3</experiments>
</comment>
<comment type="interaction">
    <interactant intactId="EBI-17208936">
        <id>P0CB47</id>
    </interactant>
    <interactant intactId="EBI-20141748">
        <id>P52954</id>
        <label>LBX1</label>
    </interactant>
    <organismsDiffer>false</organismsDiffer>
    <experiments>3</experiments>
</comment>
<comment type="interaction">
    <interactant intactId="EBI-17208936">
        <id>P0CB47</id>
    </interactant>
    <interactant intactId="EBI-740738">
        <id>O95751</id>
        <label>LDOC1</label>
    </interactant>
    <organismsDiffer>false</organismsDiffer>
    <experiments>3</experiments>
</comment>
<comment type="interaction">
    <interactant intactId="EBI-17208936">
        <id>P0CB47</id>
    </interactant>
    <interactant intactId="EBI-12179869">
        <id>P50458</id>
        <label>LHX2</label>
    </interactant>
    <organismsDiffer>false</organismsDiffer>
    <experiments>3</experiments>
</comment>
<comment type="interaction">
    <interactant intactId="EBI-17208936">
        <id>P0CB47</id>
    </interactant>
    <interactant intactId="EBI-12039345">
        <id>Q9UBR4-2</id>
        <label>LHX3</label>
    </interactant>
    <organismsDiffer>false</organismsDiffer>
    <experiments>3</experiments>
</comment>
<comment type="interaction">
    <interactant intactId="EBI-17208936">
        <id>P0CB47</id>
    </interactant>
    <interactant intactId="EBI-10175218">
        <id>Q9NQ69</id>
        <label>LHX9</label>
    </interactant>
    <organismsDiffer>false</organismsDiffer>
    <experiments>3</experiments>
</comment>
<comment type="interaction">
    <interactant intactId="EBI-17208936">
        <id>P0CB47</id>
    </interactant>
    <interactant intactId="EBI-11522433">
        <id>Q5JR59-3</id>
        <label>MTUS2</label>
    </interactant>
    <organismsDiffer>false</organismsDiffer>
    <experiments>3</experiments>
</comment>
<comment type="interaction">
    <interactant intactId="EBI-17208936">
        <id>P0CB47</id>
    </interactant>
    <interactant intactId="EBI-7950997">
        <id>Q96RE7</id>
        <label>NACC1</label>
    </interactant>
    <organismsDiffer>false</organismsDiffer>
    <experiments>3</experiments>
</comment>
<comment type="interaction">
    <interactant intactId="EBI-17208936">
        <id>P0CB47</id>
    </interactant>
    <interactant intactId="EBI-17490746">
        <id>A8MTQ0</id>
        <label>NOTO</label>
    </interactant>
    <organismsDiffer>false</organismsDiffer>
    <experiments>3</experiments>
</comment>
<comment type="interaction">
    <interactant intactId="EBI-17208936">
        <id>P0CB47</id>
    </interactant>
    <interactant intactId="EBI-18294332">
        <id>Q6IEY1</id>
        <label>OR4F29</label>
    </interactant>
    <organismsDiffer>false</organismsDiffer>
    <experiments>3</experiments>
</comment>
<comment type="interaction">
    <interactant intactId="EBI-17208936">
        <id>P0CB47</id>
    </interactant>
    <interactant intactId="EBI-19949977">
        <id>Q8N127</id>
        <label>OR5AS1</label>
    </interactant>
    <organismsDiffer>false</organismsDiffer>
    <experiments>3</experiments>
</comment>
<comment type="interaction">
    <interactant intactId="EBI-17208936">
        <id>P0CB47</id>
    </interactant>
    <interactant intactId="EBI-10302990">
        <id>Q9BYU1</id>
        <label>PBX4</label>
    </interactant>
    <organismsDiffer>false</organismsDiffer>
    <experiments>3</experiments>
</comment>
<comment type="interaction">
    <interactant intactId="EBI-17208936">
        <id>P0CB47</id>
    </interactant>
    <interactant intactId="EBI-11529177">
        <id>Q9UHX1-2</id>
        <label>PUF60</label>
    </interactant>
    <organismsDiffer>false</organismsDiffer>
    <experiments>3</experiments>
</comment>
<comment type="interaction">
    <interactant intactId="EBI-17208936">
        <id>P0CB47</id>
    </interactant>
    <interactant intactId="EBI-447043">
        <id>Q15276</id>
        <label>RABEP1</label>
    </interactant>
    <organismsDiffer>false</organismsDiffer>
    <experiments>3</experiments>
</comment>
<comment type="interaction">
    <interactant intactId="EBI-17208936">
        <id>P0CB47</id>
    </interactant>
    <interactant intactId="EBI-11957366">
        <id>Q59EK9-3</id>
        <label>RUNDC3A</label>
    </interactant>
    <organismsDiffer>false</organismsDiffer>
    <experiments>3</experiments>
</comment>
<comment type="interaction">
    <interactant intactId="EBI-17208936">
        <id>P0CB47</id>
    </interactant>
    <interactant intactId="EBI-712466">
        <id>Q16623</id>
        <label>STX1A</label>
    </interactant>
    <organismsDiffer>false</organismsDiffer>
    <experiments>3</experiments>
</comment>
<comment type="interaction">
    <interactant intactId="EBI-17208936">
        <id>P0CB47</id>
    </interactant>
    <interactant intactId="EBI-529518">
        <id>Q86VP1</id>
        <label>TAX1BP1</label>
    </interactant>
    <organismsDiffer>false</organismsDiffer>
    <experiments>3</experiments>
</comment>
<comment type="interaction">
    <interactant intactId="EBI-17208936">
        <id>P0CB47</id>
    </interactant>
    <interactant intactId="EBI-1105213">
        <id>Q9UBB9</id>
        <label>TFIP11</label>
    </interactant>
    <organismsDiffer>false</organismsDiffer>
    <experiments>3</experiments>
</comment>
<comment type="interaction">
    <interactant intactId="EBI-17208936">
        <id>P0CB47</id>
    </interactant>
    <interactant intactId="EBI-11522250">
        <id>O15156-2</id>
        <label>ZBTB7B</label>
    </interactant>
    <organismsDiffer>false</organismsDiffer>
    <experiments>3</experiments>
</comment>
<comment type="interaction">
    <interactant intactId="EBI-17208936">
        <id>P0CB47</id>
    </interactant>
    <interactant intactId="EBI-373363">
        <id>Q96NG5</id>
        <label>ZNF558</label>
    </interactant>
    <organismsDiffer>false</organismsDiffer>
    <experiments>3</experiments>
</comment>
<comment type="subcellular location">
    <subcellularLocation>
        <location evidence="1">Cytoplasm</location>
    </subcellularLocation>
    <subcellularLocation>
        <location evidence="1 2">Nucleus</location>
    </subcellularLocation>
    <text evidence="1">Mainly cytoplasmic from the 4-cell stage to the morula stage. Becomes nuclear at the blastocyst stage.</text>
</comment>
<feature type="chain" id="PRO_0000386640" description="Upstream-binding factor 1-like protein 1">
    <location>
        <begin position="1"/>
        <end position="393"/>
    </location>
</feature>
<feature type="DNA-binding region" description="HMG box 1" evidence="2">
    <location>
        <begin position="100"/>
        <end position="168"/>
    </location>
</feature>
<feature type="DNA-binding region" description="HMG box 2" evidence="2">
    <location>
        <begin position="222"/>
        <end position="288"/>
    </location>
</feature>
<feature type="region of interest" description="Disordered" evidence="3">
    <location>
        <begin position="308"/>
        <end position="393"/>
    </location>
</feature>
<feature type="compositionally biased region" description="Basic and acidic residues" evidence="3">
    <location>
        <begin position="365"/>
        <end position="377"/>
    </location>
</feature>
<reference key="1">
    <citation type="journal article" date="2006" name="Nature">
        <title>Human chromosome 11 DNA sequence and analysis including novel gene identification.</title>
        <authorList>
            <person name="Taylor T.D."/>
            <person name="Noguchi H."/>
            <person name="Totoki Y."/>
            <person name="Toyoda A."/>
            <person name="Kuroki Y."/>
            <person name="Dewar K."/>
            <person name="Lloyd C."/>
            <person name="Itoh T."/>
            <person name="Takeda T."/>
            <person name="Kim D.-W."/>
            <person name="She X."/>
            <person name="Barlow K.F."/>
            <person name="Bloom T."/>
            <person name="Bruford E."/>
            <person name="Chang J.L."/>
            <person name="Cuomo C.A."/>
            <person name="Eichler E."/>
            <person name="FitzGerald M.G."/>
            <person name="Jaffe D.B."/>
            <person name="LaButti K."/>
            <person name="Nicol R."/>
            <person name="Park H.-S."/>
            <person name="Seaman C."/>
            <person name="Sougnez C."/>
            <person name="Yang X."/>
            <person name="Zimmer A.R."/>
            <person name="Zody M.C."/>
            <person name="Birren B.W."/>
            <person name="Nusbaum C."/>
            <person name="Fujiyama A."/>
            <person name="Hattori M."/>
            <person name="Rogers J."/>
            <person name="Lander E.S."/>
            <person name="Sakaki Y."/>
        </authorList>
    </citation>
    <scope>NUCLEOTIDE SEQUENCE [LARGE SCALE GENOMIC DNA]</scope>
</reference>
<accession>P0CB47</accession>
<accession>C9JMX8</accession>